<name>SEMG2_HYLLA</name>
<feature type="signal peptide" evidence="2">
    <location>
        <begin position="1"/>
        <end position="23"/>
    </location>
</feature>
<feature type="chain" id="PRO_0000032361" description="Semenogelin-2">
    <location>
        <begin position="24"/>
        <end position="582"/>
    </location>
</feature>
<feature type="region of interest" description="Disordered" evidence="3">
    <location>
        <begin position="26"/>
        <end position="65"/>
    </location>
</feature>
<feature type="region of interest" description="Disordered" evidence="3">
    <location>
        <begin position="132"/>
        <end position="159"/>
    </location>
</feature>
<feature type="region of interest" description="Disordered" evidence="3">
    <location>
        <begin position="272"/>
        <end position="295"/>
    </location>
</feature>
<feature type="region of interest" description="Disordered" evidence="3">
    <location>
        <begin position="318"/>
        <end position="358"/>
    </location>
</feature>
<feature type="region of interest" description="Disordered" evidence="3">
    <location>
        <begin position="379"/>
        <end position="417"/>
    </location>
</feature>
<feature type="region of interest" description="Disordered" evidence="3">
    <location>
        <begin position="439"/>
        <end position="582"/>
    </location>
</feature>
<feature type="compositionally biased region" description="Polar residues" evidence="3">
    <location>
        <begin position="31"/>
        <end position="40"/>
    </location>
</feature>
<feature type="compositionally biased region" description="Polar residues" evidence="3">
    <location>
        <begin position="137"/>
        <end position="159"/>
    </location>
</feature>
<feature type="compositionally biased region" description="Polar residues" evidence="3">
    <location>
        <begin position="325"/>
        <end position="335"/>
    </location>
</feature>
<feature type="compositionally biased region" description="Basic and acidic residues" evidence="3">
    <location>
        <begin position="336"/>
        <end position="345"/>
    </location>
</feature>
<feature type="compositionally biased region" description="Polar residues" evidence="3">
    <location>
        <begin position="379"/>
        <end position="397"/>
    </location>
</feature>
<feature type="compositionally biased region" description="Polar residues" evidence="3">
    <location>
        <begin position="439"/>
        <end position="457"/>
    </location>
</feature>
<feature type="compositionally biased region" description="Polar residues" evidence="3">
    <location>
        <begin position="487"/>
        <end position="496"/>
    </location>
</feature>
<feature type="compositionally biased region" description="Polar residues" evidence="3">
    <location>
        <begin position="506"/>
        <end position="524"/>
    </location>
</feature>
<feature type="compositionally biased region" description="Basic and acidic residues" evidence="3">
    <location>
        <begin position="525"/>
        <end position="552"/>
    </location>
</feature>
<feature type="compositionally biased region" description="Basic and acidic residues" evidence="3">
    <location>
        <begin position="559"/>
        <end position="582"/>
    </location>
</feature>
<proteinExistence type="evidence at transcript level"/>
<dbReference type="EMBL" id="AY781389">
    <property type="protein sequence ID" value="AAV51947.1"/>
    <property type="molecule type" value="mRNA"/>
</dbReference>
<dbReference type="SMR" id="Q5U7N1"/>
<dbReference type="GO" id="GO:0070062">
    <property type="term" value="C:extracellular exosome"/>
    <property type="evidence" value="ECO:0007669"/>
    <property type="project" value="TreeGrafter"/>
</dbReference>
<dbReference type="GO" id="GO:0050817">
    <property type="term" value="P:coagulation"/>
    <property type="evidence" value="ECO:0007669"/>
    <property type="project" value="InterPro"/>
</dbReference>
<dbReference type="GO" id="GO:1901318">
    <property type="term" value="P:negative regulation of flagellated sperm motility"/>
    <property type="evidence" value="ECO:0007669"/>
    <property type="project" value="InterPro"/>
</dbReference>
<dbReference type="GO" id="GO:0048240">
    <property type="term" value="P:sperm capacitation"/>
    <property type="evidence" value="ECO:0007669"/>
    <property type="project" value="TreeGrafter"/>
</dbReference>
<dbReference type="InterPro" id="IPR008836">
    <property type="entry name" value="Semenogelin"/>
</dbReference>
<dbReference type="PANTHER" id="PTHR10547:SF6">
    <property type="entry name" value="SEMENOGELIN-2"/>
    <property type="match status" value="1"/>
</dbReference>
<dbReference type="PANTHER" id="PTHR10547">
    <property type="entry name" value="SEMENOGELIN/SEMINAL VESICLE SECRETORY PROTEIN"/>
    <property type="match status" value="1"/>
</dbReference>
<dbReference type="Pfam" id="PF05474">
    <property type="entry name" value="Semenogelin"/>
    <property type="match status" value="1"/>
</dbReference>
<comment type="function">
    <text evidence="1">Participates in the formation of a gel matrix (sperm coagulum) entrapping the accessory gland secretions and ejaculated spermatozoa.</text>
</comment>
<comment type="subunit">
    <text evidence="1">Interacts with SERPINA5.</text>
</comment>
<comment type="subcellular location">
    <subcellularLocation>
        <location evidence="1">Secreted</location>
    </subcellularLocation>
</comment>
<comment type="similarity">
    <text evidence="4">Belongs to the semenogelin family.</text>
</comment>
<keyword id="KW-0677">Repeat</keyword>
<keyword id="KW-0964">Secreted</keyword>
<keyword id="KW-0732">Signal</keyword>
<gene>
    <name type="primary">SEMG2</name>
</gene>
<protein>
    <recommendedName>
        <fullName>Semenogelin-2</fullName>
    </recommendedName>
    <alternativeName>
        <fullName>Semenogelin II</fullName>
        <shortName>SGII</shortName>
    </alternativeName>
</protein>
<evidence type="ECO:0000250" key="1"/>
<evidence type="ECO:0000255" key="2"/>
<evidence type="ECO:0000256" key="3">
    <source>
        <dbReference type="SAM" id="MobiDB-lite"/>
    </source>
</evidence>
<evidence type="ECO:0000305" key="4"/>
<sequence>MKSIILFVLSLLLILEKQAAVMGQKCGSKGQLPSGSSQFPRGQKGQHYSGQKDEQHTKSKGSFSIQHTYHVDVNDRDRTQKSQQYDLNAQHKMTKSKQHLGGSQELLNYKQEGRDHDKSKDHFHMIVIHHKGGQAHRGTQNPSQDQGNSPSGKGISSQYSNTNKRLWVHGLTKEQASASGAQKGRTQGGSQSSYVLQTEELVANKQQRETQNSPQNKGHYQNVVEMREEHSSKLQTSLHPAYQDRLQHGPKDIFTTQDELLVYNKNQHQTKNLNQDQEHGQKTHKISYQSSRTEERQLNCGEKSVQKDVSKGGISIQTEEKIHGKSQNQVTIHSQGQEHGHKENKMSYQSSSTEERHLNCGEKGIHKGVSKGSISIQTEEQIHGKSQNQVRIPSQAQEHGHKENKMSYQSSSTEERRLNCGEKGIHKGVSKGSISIQTEEQIHGKSQNQVRIPSQAQEHGHKENKMSYQSSSTEERRLNYGGKSMQKDVSQSSTSFHTEKLVEGKSQIQTPNPNQDQWSVQNAKGKSDQSAGREQDLLSHEQKGRHQQESSEARNIVITEHEVAYDDHLTQQYNEDRNPVST</sequence>
<accession>Q5U7N1</accession>
<organism>
    <name type="scientific">Hylobates lar</name>
    <name type="common">Lar gibbon</name>
    <name type="synonym">White-handed gibbon</name>
    <dbReference type="NCBI Taxonomy" id="9580"/>
    <lineage>
        <taxon>Eukaryota</taxon>
        <taxon>Metazoa</taxon>
        <taxon>Chordata</taxon>
        <taxon>Craniata</taxon>
        <taxon>Vertebrata</taxon>
        <taxon>Euteleostomi</taxon>
        <taxon>Mammalia</taxon>
        <taxon>Eutheria</taxon>
        <taxon>Euarchontoglires</taxon>
        <taxon>Primates</taxon>
        <taxon>Haplorrhini</taxon>
        <taxon>Catarrhini</taxon>
        <taxon>Hylobatidae</taxon>
        <taxon>Hylobates</taxon>
    </lineage>
</organism>
<reference key="1">
    <citation type="journal article" date="2004" name="Nat. Genet.">
        <title>Rate of molecular evolution of the seminal protein gene SEMG2 correlates with levels of female promiscuity.</title>
        <authorList>
            <person name="Dorus S."/>
            <person name="Evans P.D."/>
            <person name="Wyckoff G.J."/>
            <person name="Choi S.S."/>
            <person name="Lahn B.T."/>
        </authorList>
    </citation>
    <scope>NUCLEOTIDE SEQUENCE [MRNA]</scope>
</reference>